<proteinExistence type="evidence at protein level"/>
<evidence type="ECO:0000250" key="1">
    <source>
        <dbReference type="UniProtKB" id="P04853"/>
    </source>
</evidence>
<evidence type="ECO:0000250" key="2">
    <source>
        <dbReference type="UniProtKB" id="Q91UL0"/>
    </source>
</evidence>
<evidence type="ECO:0000250" key="3">
    <source>
        <dbReference type="UniProtKB" id="Q9WAF5"/>
    </source>
</evidence>
<evidence type="ECO:0000255" key="4"/>
<evidence type="ECO:0000305" key="5"/>
<evidence type="ECO:0007829" key="6">
    <source>
        <dbReference type="PDB" id="3T1E"/>
    </source>
</evidence>
<organismHost>
    <name type="scientific">Gallus gallus</name>
    <name type="common">Chicken</name>
    <dbReference type="NCBI Taxonomy" id="9031"/>
</organismHost>
<keyword id="KW-0002">3D-structure</keyword>
<keyword id="KW-1015">Disulfide bond</keyword>
<keyword id="KW-0325">Glycoprotein</keyword>
<keyword id="KW-0348">Hemagglutinin</keyword>
<keyword id="KW-1032">Host cell membrane</keyword>
<keyword id="KW-1043">Host membrane</keyword>
<keyword id="KW-0945">Host-virus interaction</keyword>
<keyword id="KW-0378">Hydrolase</keyword>
<keyword id="KW-0472">Membrane</keyword>
<keyword id="KW-0735">Signal-anchor</keyword>
<keyword id="KW-0812">Transmembrane</keyword>
<keyword id="KW-1133">Transmembrane helix</keyword>
<keyword id="KW-1161">Viral attachment to host cell</keyword>
<keyword id="KW-0261">Viral envelope protein</keyword>
<keyword id="KW-0946">Virion</keyword>
<keyword id="KW-1160">Virus entry into host cell</keyword>
<organism>
    <name type="scientific">Newcastle disease virus (strain Chicken/Australia-Victoria/32)</name>
    <name type="common">NDV</name>
    <dbReference type="NCBI Taxonomy" id="11177"/>
    <lineage>
        <taxon>Viruses</taxon>
        <taxon>Riboviria</taxon>
        <taxon>Orthornavirae</taxon>
        <taxon>Negarnaviricota</taxon>
        <taxon>Haploviricotina</taxon>
        <taxon>Monjiviricetes</taxon>
        <taxon>Mononegavirales</taxon>
        <taxon>Paramyxoviridae</taxon>
        <taxon>Avulavirinae</taxon>
        <taxon>Orthoavulavirus</taxon>
        <taxon>Orthoavulavirus javaense</taxon>
        <taxon>Avian paramyxovirus 1</taxon>
    </lineage>
</organism>
<sequence length="570" mass="62284">MNRAVCQVALENDEREAKNTWRLVFRIAILLLTVMTLAISAAALAYSMEASTPGDLVSIPTAISRAEGKITSALGSNQDVVDRIYKQVALESPLALLNTESIIMNAITSLSYQINGAANNSGCGAPVHDPDYIGGIGKELIVDDTSDVTSFYPSAFQEHLNFIPAPTTGSGCTRIPSFDMSATHCYTHNVIFSGCRDHSHSHQYLALGVLRTSATGRVFFSTLRSINLDDTQNRKSCSVSATPLGCDMLCSKVTETEEEDYNSVIPTSMVHGRLGFDGQYHEKDLDVTTLFGDWVANYPGVGGGSFIDNRVWFPVYGGLKPSSPSDTGQEGRYVIYKRYNDTCPDEQDYQIRMAKSSYKPGRFGGKRVQQAILSIKVSTSLGEDPVLTIPPNTVTLMGAEGRVLTVGTSHFLYQRGSSYFSPALLYPMTVNNNTATLHSPYTFNAFTRPGSVPCQASARCPNSCVTGVYTDPYPLVFHRNHTLRGVFGTMLDDEQARLNLVSAVFDNISRSRITRVSSSRTKAAYTTSTCFKVVKTNKTYCLSIAEISNTLFGEFRIVPLLVEILKDDGV</sequence>
<feature type="chain" id="PRO_0000142606" description="Hemagglutinin-neuraminidase">
    <location>
        <begin position="1"/>
        <end position="570"/>
    </location>
</feature>
<feature type="topological domain" description="Intravirion" evidence="4">
    <location>
        <begin position="1"/>
        <end position="26"/>
    </location>
</feature>
<feature type="transmembrane region" description="Helical" evidence="4">
    <location>
        <begin position="27"/>
        <end position="48"/>
    </location>
</feature>
<feature type="topological domain" description="Virion surface" evidence="4">
    <location>
        <begin position="49"/>
        <end position="570"/>
    </location>
</feature>
<feature type="region of interest" description="Important for interaction with fusion/F protein" evidence="2">
    <location>
        <begin position="124"/>
        <end position="152"/>
    </location>
</feature>
<feature type="region of interest" description="Involved in neuraminidase activity" evidence="2">
    <location>
        <begin position="233"/>
        <end position="238"/>
    </location>
</feature>
<feature type="glycosylation site" description="N-linked (GlcNAc...) asparagine; by host" evidence="4">
    <location>
        <position position="119"/>
    </location>
</feature>
<feature type="glycosylation site" description="N-linked (GlcNAc...) asparagine; by host" evidence="2">
    <location>
        <position position="340"/>
    </location>
</feature>
<feature type="glycosylation site" description="N-linked (GlcNAc...) asparagine; by host" evidence="2">
    <location>
        <position position="432"/>
    </location>
</feature>
<feature type="glycosylation site" description="N-linked (GlcNAc...) asparagine; by host" evidence="2">
    <location>
        <position position="480"/>
    </location>
</feature>
<feature type="glycosylation site" description="N-linked (GlcNAc...) asparagine; by host" evidence="4">
    <location>
        <position position="507"/>
    </location>
</feature>
<feature type="glycosylation site" description="N-linked (GlcNAc...) asparagine; by host" evidence="4">
    <location>
        <position position="537"/>
    </location>
</feature>
<feature type="disulfide bond" evidence="3">
    <location>
        <begin position="172"/>
        <end position="195"/>
    </location>
</feature>
<feature type="disulfide bond" evidence="3">
    <location>
        <begin position="185"/>
        <end position="246"/>
    </location>
</feature>
<feature type="disulfide bond" evidence="3">
    <location>
        <begin position="237"/>
        <end position="250"/>
    </location>
</feature>
<feature type="disulfide bond" evidence="3">
    <location>
        <begin position="343"/>
        <end position="460"/>
    </location>
</feature>
<feature type="disulfide bond" evidence="3">
    <location>
        <begin position="454"/>
        <end position="464"/>
    </location>
</feature>
<feature type="disulfide bond" evidence="3">
    <location>
        <begin position="530"/>
        <end position="541"/>
    </location>
</feature>
<feature type="sequence conflict" description="In Ref. 3; AAA46662." evidence="5" ref="3">
    <original>H</original>
    <variation>HY</variation>
    <location>
        <position position="184"/>
    </location>
</feature>
<feature type="sequence conflict" description="In Ref. 1; AAA46670." evidence="5" ref="1">
    <original>D</original>
    <variation>H</variation>
    <location>
        <position position="197"/>
    </location>
</feature>
<feature type="sequence conflict" description="In Ref. 1; AAA46670." evidence="5" ref="1">
    <original>E</original>
    <variation>Q</variation>
    <location>
        <position position="259"/>
    </location>
</feature>
<feature type="helix" evidence="6">
    <location>
        <begin position="81"/>
        <end position="85"/>
    </location>
</feature>
<feature type="helix" evidence="6">
    <location>
        <begin position="86"/>
        <end position="89"/>
    </location>
</feature>
<feature type="helix" evidence="6">
    <location>
        <begin position="92"/>
        <end position="111"/>
    </location>
</feature>
<feature type="helix" evidence="6">
    <location>
        <begin position="130"/>
        <end position="132"/>
    </location>
</feature>
<feature type="turn" evidence="6">
    <location>
        <begin position="133"/>
        <end position="135"/>
    </location>
</feature>
<feature type="strand" evidence="6">
    <location>
        <begin position="136"/>
        <end position="138"/>
    </location>
</feature>
<feature type="strand" evidence="6">
    <location>
        <begin position="144"/>
        <end position="146"/>
    </location>
</feature>
<feature type="helix" evidence="6">
    <location>
        <begin position="148"/>
        <end position="150"/>
    </location>
</feature>
<feature type="strand" evidence="6">
    <location>
        <begin position="167"/>
        <end position="170"/>
    </location>
</feature>
<feature type="strand" evidence="6">
    <location>
        <begin position="172"/>
        <end position="192"/>
    </location>
</feature>
<feature type="turn" evidence="6">
    <location>
        <begin position="193"/>
        <end position="195"/>
    </location>
</feature>
<feature type="strand" evidence="6">
    <location>
        <begin position="202"/>
        <end position="212"/>
    </location>
</feature>
<feature type="strand" evidence="6">
    <location>
        <begin position="218"/>
        <end position="228"/>
    </location>
</feature>
<feature type="strand" evidence="6">
    <location>
        <begin position="238"/>
        <end position="242"/>
    </location>
</feature>
<feature type="strand" evidence="6">
    <location>
        <begin position="245"/>
        <end position="252"/>
    </location>
</feature>
<feature type="helix" evidence="6">
    <location>
        <begin position="257"/>
        <end position="260"/>
    </location>
</feature>
<feature type="strand" evidence="6">
    <location>
        <begin position="269"/>
        <end position="274"/>
    </location>
</feature>
<feature type="strand" evidence="6">
    <location>
        <begin position="280"/>
        <end position="285"/>
    </location>
</feature>
<feature type="turn" evidence="6">
    <location>
        <begin position="287"/>
        <end position="293"/>
    </location>
</feature>
<feature type="strand" evidence="6">
    <location>
        <begin position="294"/>
        <end position="299"/>
    </location>
</feature>
<feature type="strand" evidence="6">
    <location>
        <begin position="305"/>
        <end position="307"/>
    </location>
</feature>
<feature type="strand" evidence="6">
    <location>
        <begin position="310"/>
        <end position="319"/>
    </location>
</feature>
<feature type="helix" evidence="6">
    <location>
        <begin position="324"/>
        <end position="327"/>
    </location>
</feature>
<feature type="turn" evidence="6">
    <location>
        <begin position="328"/>
        <end position="331"/>
    </location>
</feature>
<feature type="helix" evidence="6">
    <location>
        <begin position="347"/>
        <end position="356"/>
    </location>
</feature>
<feature type="helix" evidence="6">
    <location>
        <begin position="361"/>
        <end position="363"/>
    </location>
</feature>
<feature type="strand" evidence="6">
    <location>
        <begin position="368"/>
        <end position="376"/>
    </location>
</feature>
<feature type="strand" evidence="6">
    <location>
        <begin position="378"/>
        <end position="388"/>
    </location>
</feature>
<feature type="turn" evidence="6">
    <location>
        <begin position="392"/>
        <end position="394"/>
    </location>
</feature>
<feature type="strand" evidence="6">
    <location>
        <begin position="401"/>
        <end position="406"/>
    </location>
</feature>
<feature type="strand" evidence="6">
    <location>
        <begin position="409"/>
        <end position="414"/>
    </location>
</feature>
<feature type="strand" evidence="6">
    <location>
        <begin position="422"/>
        <end position="430"/>
    </location>
</feature>
<feature type="strand" evidence="6">
    <location>
        <begin position="435"/>
        <end position="437"/>
    </location>
</feature>
<feature type="strand" evidence="6">
    <location>
        <begin position="441"/>
        <end position="447"/>
    </location>
</feature>
<feature type="strand" evidence="6">
    <location>
        <begin position="486"/>
        <end position="491"/>
    </location>
</feature>
<feature type="strand" evidence="6">
    <location>
        <begin position="493"/>
        <end position="498"/>
    </location>
</feature>
<feature type="strand" evidence="6">
    <location>
        <begin position="500"/>
        <end position="505"/>
    </location>
</feature>
<feature type="strand" evidence="6">
    <location>
        <begin position="514"/>
        <end position="516"/>
    </location>
</feature>
<feature type="strand" evidence="6">
    <location>
        <begin position="522"/>
        <end position="533"/>
    </location>
</feature>
<feature type="turn" evidence="6">
    <location>
        <begin position="534"/>
        <end position="537"/>
    </location>
</feature>
<feature type="strand" evidence="6">
    <location>
        <begin position="538"/>
        <end position="549"/>
    </location>
</feature>
<feature type="turn" evidence="6">
    <location>
        <begin position="550"/>
        <end position="552"/>
    </location>
</feature>
<feature type="strand" evidence="6">
    <location>
        <begin position="553"/>
        <end position="565"/>
    </location>
</feature>
<name>HN_NDVA</name>
<protein>
    <recommendedName>
        <fullName>Hemagglutinin-neuraminidase</fullName>
        <ecNumber evidence="3">3.2.1.18</ecNumber>
    </recommendedName>
</protein>
<accession>P12554</accession>
<reference key="1">
    <citation type="journal article" date="1987" name="Virus Res.">
        <title>Nucleotide sequence of the gene encoding the Newcastle disease virus hemagglutinin-neuraminidase protein and comparisons of paramyxovirus hemagglutinin-neuraminidase protein sequences.</title>
        <authorList>
            <person name="McGinnes L.W."/>
            <person name="Wilde A."/>
            <person name="Morrison T.G."/>
        </authorList>
    </citation>
    <scope>NUCLEOTIDE SEQUENCE</scope>
</reference>
<reference key="2">
    <citation type="journal article" date="1988" name="J. Biol. Chem.">
        <title>Characterization of the sites of proteolytic activation of Newcastle disease virus membrane glycoprotein precursors.</title>
        <authorList>
            <person name="Gorman J.J."/>
            <person name="Nestorowicz A."/>
            <person name="Mitchell S.J."/>
            <person name="Corino G.L."/>
            <person name="Selleck P.W."/>
        </authorList>
    </citation>
    <scope>NUCLEOTIDE SEQUENCE</scope>
</reference>
<reference key="3">
    <citation type="journal article" date="1989" name="Virology">
        <title>Newcastle disease virus evolution. I. Multiple lineages defined by sequence variability of the hemagglutinin-neuraminidase gene.</title>
        <authorList>
            <person name="Sakaguchi T."/>
            <person name="Toyoda T."/>
            <person name="Gotoh B."/>
            <person name="Inocencio N.M."/>
            <person name="Kuma K."/>
            <person name="Miyata T."/>
            <person name="Nagai Y."/>
        </authorList>
    </citation>
    <scope>NUCLEOTIDE SEQUENCE</scope>
</reference>
<dbReference type="EC" id="3.2.1.18" evidence="3"/>
<dbReference type="EMBL" id="M22110">
    <property type="protein sequence ID" value="AAA46670.1"/>
    <property type="molecule type" value="mRNA"/>
</dbReference>
<dbReference type="EMBL" id="M24712">
    <property type="protein sequence ID" value="AAA46662.1"/>
    <property type="molecule type" value="Genomic_RNA"/>
</dbReference>
<dbReference type="PIR" id="B31110">
    <property type="entry name" value="HNNZAV"/>
</dbReference>
<dbReference type="PDB" id="3T1E">
    <property type="method" value="X-ray"/>
    <property type="resolution" value="3.30 A"/>
    <property type="chains" value="A/B/E/F=49-570"/>
</dbReference>
<dbReference type="PDBsum" id="3T1E"/>
<dbReference type="SMR" id="P12554"/>
<dbReference type="DIP" id="DIP-60382N"/>
<dbReference type="CAZy" id="GH83">
    <property type="family name" value="Glycoside Hydrolase Family 83"/>
</dbReference>
<dbReference type="GlyCosmos" id="P12554">
    <property type="glycosylation" value="6 sites, No reported glycans"/>
</dbReference>
<dbReference type="EvolutionaryTrace" id="P12554"/>
<dbReference type="GO" id="GO:0020002">
    <property type="term" value="C:host cell plasma membrane"/>
    <property type="evidence" value="ECO:0007669"/>
    <property type="project" value="UniProtKB-SubCell"/>
</dbReference>
<dbReference type="GO" id="GO:0016020">
    <property type="term" value="C:membrane"/>
    <property type="evidence" value="ECO:0007669"/>
    <property type="project" value="UniProtKB-KW"/>
</dbReference>
<dbReference type="GO" id="GO:0019031">
    <property type="term" value="C:viral envelope"/>
    <property type="evidence" value="ECO:0007669"/>
    <property type="project" value="UniProtKB-KW"/>
</dbReference>
<dbReference type="GO" id="GO:0055036">
    <property type="term" value="C:virion membrane"/>
    <property type="evidence" value="ECO:0007669"/>
    <property type="project" value="UniProtKB-SubCell"/>
</dbReference>
<dbReference type="GO" id="GO:0004308">
    <property type="term" value="F:exo-alpha-sialidase activity"/>
    <property type="evidence" value="ECO:0007669"/>
    <property type="project" value="UniProtKB-EC"/>
</dbReference>
<dbReference type="GO" id="GO:0046789">
    <property type="term" value="F:host cell surface receptor binding"/>
    <property type="evidence" value="ECO:0007669"/>
    <property type="project" value="InterPro"/>
</dbReference>
<dbReference type="GO" id="GO:0042802">
    <property type="term" value="F:identical protein binding"/>
    <property type="evidence" value="ECO:0000353"/>
    <property type="project" value="IntAct"/>
</dbReference>
<dbReference type="GO" id="GO:0046718">
    <property type="term" value="P:symbiont entry into host cell"/>
    <property type="evidence" value="ECO:0007669"/>
    <property type="project" value="UniProtKB-KW"/>
</dbReference>
<dbReference type="GO" id="GO:0019062">
    <property type="term" value="P:virion attachment to host cell"/>
    <property type="evidence" value="ECO:0007669"/>
    <property type="project" value="UniProtKB-KW"/>
</dbReference>
<dbReference type="CDD" id="cd15469">
    <property type="entry name" value="HN"/>
    <property type="match status" value="1"/>
</dbReference>
<dbReference type="FunFam" id="2.120.10.10:FF:000004">
    <property type="entry name" value="Hemagglutinin-neuraminidase"/>
    <property type="match status" value="1"/>
</dbReference>
<dbReference type="Gene3D" id="2.120.10.10">
    <property type="match status" value="1"/>
</dbReference>
<dbReference type="InterPro" id="IPR016285">
    <property type="entry name" value="Hemagglutn-neuramid"/>
</dbReference>
<dbReference type="InterPro" id="IPR000665">
    <property type="entry name" value="Hemagglutn/HN"/>
</dbReference>
<dbReference type="InterPro" id="IPR036278">
    <property type="entry name" value="Sialidase_sf"/>
</dbReference>
<dbReference type="Pfam" id="PF00423">
    <property type="entry name" value="HN"/>
    <property type="match status" value="1"/>
</dbReference>
<dbReference type="PIRSF" id="PIRSF001072">
    <property type="entry name" value="Hemagglut-neuramid_paramyxoV"/>
    <property type="match status" value="1"/>
</dbReference>
<dbReference type="SUPFAM" id="SSF50939">
    <property type="entry name" value="Sialidases"/>
    <property type="match status" value="1"/>
</dbReference>
<comment type="function">
    <text evidence="2">Mediates the viral entry into the host cell together with fusion/F protein. Attaches the virus to sialic acid-containing cell receptors and thereby initiates infection. Binding of HN protein to the receptor induces a conformational change that allows the F protein to trigger virion/cell membranes fusion.</text>
</comment>
<comment type="function">
    <text evidence="2">Neuraminidase activity ensures the efficient spread of the virus by dissociating the mature virions from the neuraminic acid containing glycoproteins.</text>
</comment>
<comment type="catalytic activity">
    <reaction evidence="2">
        <text>Hydrolysis of alpha-(2-&gt;3)-, alpha-(2-&gt;6)-, alpha-(2-&gt;8)- glycosidic linkages of terminal sialic acid residues in oligosaccharides, glycoproteins, glycolipids, colominic acid and synthetic substrates.</text>
        <dbReference type="EC" id="3.2.1.18"/>
    </reaction>
</comment>
<comment type="subunit">
    <text evidence="1 2 3">Homotetramer; composed of disulfide-linked homodimers (By similarity). Interacts with F protein trimer (By similarity). Interacts with host CG-1B; this interaction inhibits viral adsorption and replication rather than internalization (By similarity).</text>
</comment>
<comment type="interaction">
    <interactant intactId="EBI-15941682">
        <id>P12554</id>
    </interactant>
    <interactant intactId="EBI-15941682">
        <id>P12554</id>
        <label>HN</label>
    </interactant>
    <organismsDiffer>false</organismsDiffer>
    <experiments>4</experiments>
</comment>
<comment type="subcellular location">
    <subcellularLocation>
        <location evidence="2">Virion membrane</location>
        <topology evidence="2">Single-pass type II membrane protein</topology>
    </subcellularLocation>
    <subcellularLocation>
        <location evidence="2">Host cell membrane</location>
        <topology evidence="2">Single-pass type II membrane protein</topology>
    </subcellularLocation>
</comment>
<comment type="domain">
    <text evidence="3">The C-terminus (head domain) is involved in binding the cellular receptor.</text>
</comment>
<comment type="similarity">
    <text evidence="5">Belongs to the paramyxoviruses hemagglutinin-neuraminidase family.</text>
</comment>
<gene>
    <name type="primary">HN</name>
</gene>